<sequence>MAPRQKKPNKSDDDDGDLHRKKQSFFKQRFPGFKKKASELSVLCGNSVGFICYGPDNDLHVWPQSQDHNPQALHEIVAKFNALSDERRKNHACDLNDFPHHLKGLSREELRKHLLHLDSQLLGVREQKIEILKKTLTGSSEKDGARVSENSAISDHKLKIEPNLTDILSEDHLIRVSDKKLGSCDVFDELAYVVRGSRNLNENVSNYESKDAAYTGMDHLGTFGGNYLQEAAAELYQTYNLGNFCDDHVWDLEFASRLPPLHTFSDPLMTTNTCQTMSSDMISI</sequence>
<name>AGL49_ARATH</name>
<proteinExistence type="evidence at protein level"/>
<dbReference type="EMBL" id="AC005966">
    <property type="protein sequence ID" value="AAD14480.1"/>
    <property type="molecule type" value="Genomic_DNA"/>
</dbReference>
<dbReference type="EMBL" id="CP002684">
    <property type="protein sequence ID" value="AEE33652.1"/>
    <property type="molecule type" value="Genomic_DNA"/>
</dbReference>
<dbReference type="PIR" id="G96624">
    <property type="entry name" value="G96624"/>
</dbReference>
<dbReference type="RefSeq" id="NP_176212.1">
    <property type="nucleotide sequence ID" value="NM_104696.2"/>
</dbReference>
<dbReference type="SMR" id="Q9ZUI9"/>
<dbReference type="FunCoup" id="Q9ZUI9">
    <property type="interactions" value="2"/>
</dbReference>
<dbReference type="IntAct" id="Q9ZUI9">
    <property type="interactions" value="14"/>
</dbReference>
<dbReference type="STRING" id="3702.Q9ZUI9"/>
<dbReference type="PaxDb" id="3702-AT1G60040.1"/>
<dbReference type="ProteomicsDB" id="244772"/>
<dbReference type="EnsemblPlants" id="AT1G60040.1">
    <property type="protein sequence ID" value="AT1G60040.1"/>
    <property type="gene ID" value="AT1G60040"/>
</dbReference>
<dbReference type="GeneID" id="842298"/>
<dbReference type="Gramene" id="AT1G60040.1">
    <property type="protein sequence ID" value="AT1G60040.1"/>
    <property type="gene ID" value="AT1G60040"/>
</dbReference>
<dbReference type="KEGG" id="ath:AT1G60040"/>
<dbReference type="Araport" id="AT1G60040"/>
<dbReference type="TAIR" id="AT1G60040">
    <property type="gene designation" value="AGL49"/>
</dbReference>
<dbReference type="eggNOG" id="KOG0014">
    <property type="taxonomic scope" value="Eukaryota"/>
</dbReference>
<dbReference type="HOGENOM" id="CLU_081413_0_0_1"/>
<dbReference type="InParanoid" id="Q9ZUI9"/>
<dbReference type="OMA" id="IPEHNAS"/>
<dbReference type="PhylomeDB" id="Q9ZUI9"/>
<dbReference type="PRO" id="PR:Q9ZUI9"/>
<dbReference type="Proteomes" id="UP000006548">
    <property type="component" value="Chromosome 1"/>
</dbReference>
<dbReference type="ExpressionAtlas" id="Q9ZUI9">
    <property type="expression patterns" value="baseline and differential"/>
</dbReference>
<dbReference type="GO" id="GO:0005634">
    <property type="term" value="C:nucleus"/>
    <property type="evidence" value="ECO:0007669"/>
    <property type="project" value="UniProtKB-SubCell"/>
</dbReference>
<dbReference type="GO" id="GO:0000987">
    <property type="term" value="F:cis-regulatory region sequence-specific DNA binding"/>
    <property type="evidence" value="ECO:0007669"/>
    <property type="project" value="InterPro"/>
</dbReference>
<dbReference type="GO" id="GO:0003700">
    <property type="term" value="F:DNA-binding transcription factor activity"/>
    <property type="evidence" value="ECO:0000250"/>
    <property type="project" value="TAIR"/>
</dbReference>
<dbReference type="GO" id="GO:0000981">
    <property type="term" value="F:DNA-binding transcription factor activity, RNA polymerase II-specific"/>
    <property type="evidence" value="ECO:0007669"/>
    <property type="project" value="InterPro"/>
</dbReference>
<dbReference type="GO" id="GO:0046983">
    <property type="term" value="F:protein dimerization activity"/>
    <property type="evidence" value="ECO:0007669"/>
    <property type="project" value="InterPro"/>
</dbReference>
<dbReference type="GO" id="GO:0045944">
    <property type="term" value="P:positive regulation of transcription by RNA polymerase II"/>
    <property type="evidence" value="ECO:0007669"/>
    <property type="project" value="InterPro"/>
</dbReference>
<dbReference type="CDD" id="cd00266">
    <property type="entry name" value="MADS_SRF_like"/>
    <property type="match status" value="1"/>
</dbReference>
<dbReference type="Gene3D" id="3.40.1810.10">
    <property type="entry name" value="Transcription factor, MADS-box"/>
    <property type="match status" value="1"/>
</dbReference>
<dbReference type="InterPro" id="IPR033897">
    <property type="entry name" value="SRF-like_MADS-box"/>
</dbReference>
<dbReference type="InterPro" id="IPR002100">
    <property type="entry name" value="TF_MADSbox"/>
</dbReference>
<dbReference type="InterPro" id="IPR036879">
    <property type="entry name" value="TF_MADSbox_sf"/>
</dbReference>
<dbReference type="Pfam" id="PF00319">
    <property type="entry name" value="SRF-TF"/>
    <property type="match status" value="1"/>
</dbReference>
<dbReference type="SUPFAM" id="SSF55455">
    <property type="entry name" value="SRF-like"/>
    <property type="match status" value="1"/>
</dbReference>
<dbReference type="PROSITE" id="PS50066">
    <property type="entry name" value="MADS_BOX_2"/>
    <property type="match status" value="1"/>
</dbReference>
<comment type="function">
    <text evidence="5">Probable transcription factor that may function in the maintenance of the proper function of the central cell in pollen tube attraction.</text>
</comment>
<comment type="subunit">
    <text evidence="3">Interacts with MEE14/CBP1.</text>
</comment>
<comment type="subcellular location">
    <subcellularLocation>
        <location evidence="1">Nucleus</location>
    </subcellularLocation>
</comment>
<keyword id="KW-0238">DNA-binding</keyword>
<keyword id="KW-0539">Nucleus</keyword>
<keyword id="KW-1185">Reference proteome</keyword>
<keyword id="KW-0804">Transcription</keyword>
<keyword id="KW-0805">Transcription regulation</keyword>
<evidence type="ECO:0000255" key="1">
    <source>
        <dbReference type="PROSITE-ProRule" id="PRU00251"/>
    </source>
</evidence>
<evidence type="ECO:0000256" key="2">
    <source>
        <dbReference type="SAM" id="MobiDB-lite"/>
    </source>
</evidence>
<evidence type="ECO:0000269" key="3">
    <source>
    </source>
</evidence>
<evidence type="ECO:0000305" key="4"/>
<evidence type="ECO:0000305" key="5">
    <source>
    </source>
</evidence>
<evidence type="ECO:0000312" key="6">
    <source>
        <dbReference type="Araport" id="AT1G60040"/>
    </source>
</evidence>
<evidence type="ECO:0000312" key="7">
    <source>
        <dbReference type="EMBL" id="AAD14480.1"/>
    </source>
</evidence>
<feature type="chain" id="PRO_0000435412" description="Agamous-like MADS-box protein AGL49">
    <location>
        <begin position="1"/>
        <end position="284"/>
    </location>
</feature>
<feature type="domain" description="MADS-box" evidence="1">
    <location>
        <begin position="21"/>
        <end position="66"/>
    </location>
</feature>
<feature type="region of interest" description="Disordered" evidence="2">
    <location>
        <begin position="1"/>
        <end position="20"/>
    </location>
</feature>
<accession>Q9ZUI9</accession>
<reference key="1">
    <citation type="journal article" date="2000" name="Nature">
        <title>Sequence and analysis of chromosome 1 of the plant Arabidopsis thaliana.</title>
        <authorList>
            <person name="Theologis A."/>
            <person name="Ecker J.R."/>
            <person name="Palm C.J."/>
            <person name="Federspiel N.A."/>
            <person name="Kaul S."/>
            <person name="White O."/>
            <person name="Alonso J."/>
            <person name="Altafi H."/>
            <person name="Araujo R."/>
            <person name="Bowman C.L."/>
            <person name="Brooks S.Y."/>
            <person name="Buehler E."/>
            <person name="Chan A."/>
            <person name="Chao Q."/>
            <person name="Chen H."/>
            <person name="Cheuk R.F."/>
            <person name="Chin C.W."/>
            <person name="Chung M.K."/>
            <person name="Conn L."/>
            <person name="Conway A.B."/>
            <person name="Conway A.R."/>
            <person name="Creasy T.H."/>
            <person name="Dewar K."/>
            <person name="Dunn P."/>
            <person name="Etgu P."/>
            <person name="Feldblyum T.V."/>
            <person name="Feng J.-D."/>
            <person name="Fong B."/>
            <person name="Fujii C.Y."/>
            <person name="Gill J.E."/>
            <person name="Goldsmith A.D."/>
            <person name="Haas B."/>
            <person name="Hansen N.F."/>
            <person name="Hughes B."/>
            <person name="Huizar L."/>
            <person name="Hunter J.L."/>
            <person name="Jenkins J."/>
            <person name="Johnson-Hopson C."/>
            <person name="Khan S."/>
            <person name="Khaykin E."/>
            <person name="Kim C.J."/>
            <person name="Koo H.L."/>
            <person name="Kremenetskaia I."/>
            <person name="Kurtz D.B."/>
            <person name="Kwan A."/>
            <person name="Lam B."/>
            <person name="Langin-Hooper S."/>
            <person name="Lee A."/>
            <person name="Lee J.M."/>
            <person name="Lenz C.A."/>
            <person name="Li J.H."/>
            <person name="Li Y.-P."/>
            <person name="Lin X."/>
            <person name="Liu S.X."/>
            <person name="Liu Z.A."/>
            <person name="Luros J.S."/>
            <person name="Maiti R."/>
            <person name="Marziali A."/>
            <person name="Militscher J."/>
            <person name="Miranda M."/>
            <person name="Nguyen M."/>
            <person name="Nierman W.C."/>
            <person name="Osborne B.I."/>
            <person name="Pai G."/>
            <person name="Peterson J."/>
            <person name="Pham P.K."/>
            <person name="Rizzo M."/>
            <person name="Rooney T."/>
            <person name="Rowley D."/>
            <person name="Sakano H."/>
            <person name="Salzberg S.L."/>
            <person name="Schwartz J.R."/>
            <person name="Shinn P."/>
            <person name="Southwick A.M."/>
            <person name="Sun H."/>
            <person name="Tallon L.J."/>
            <person name="Tambunga G."/>
            <person name="Toriumi M.J."/>
            <person name="Town C.D."/>
            <person name="Utterback T."/>
            <person name="Van Aken S."/>
            <person name="Vaysberg M."/>
            <person name="Vysotskaia V.S."/>
            <person name="Walker M."/>
            <person name="Wu D."/>
            <person name="Yu G."/>
            <person name="Fraser C.M."/>
            <person name="Venter J.C."/>
            <person name="Davis R.W."/>
        </authorList>
    </citation>
    <scope>NUCLEOTIDE SEQUENCE [LARGE SCALE GENOMIC DNA]</scope>
    <source>
        <strain>cv. Columbia</strain>
    </source>
</reference>
<reference key="2">
    <citation type="journal article" date="2017" name="Plant J.">
        <title>Araport11: a complete reannotation of the Arabidopsis thaliana reference genome.</title>
        <authorList>
            <person name="Cheng C.Y."/>
            <person name="Krishnakumar V."/>
            <person name="Chan A.P."/>
            <person name="Thibaud-Nissen F."/>
            <person name="Schobel S."/>
            <person name="Town C.D."/>
        </authorList>
    </citation>
    <scope>GENOME REANNOTATION</scope>
    <source>
        <strain>cv. Columbia</strain>
    </source>
</reference>
<reference key="3">
    <citation type="journal article" date="2015" name="Plant Cell">
        <title>Arabidopsis CBP1 is a novel regulator of transcription initiation in central cell-mediated pollen tube guidance.</title>
        <authorList>
            <person name="Li H.J."/>
            <person name="Zhu S.S."/>
            <person name="Zhang M.X."/>
            <person name="Wang T."/>
            <person name="Liang L."/>
            <person name="Xue Y."/>
            <person name="Shi D.Q."/>
            <person name="Liu J."/>
            <person name="Yang W.C."/>
        </authorList>
    </citation>
    <scope>FUNCTION</scope>
    <scope>INTERACTION WITH ME14/CBP1</scope>
</reference>
<protein>
    <recommendedName>
        <fullName evidence="4">Agamous-like MADS-box protein AGL49</fullName>
    </recommendedName>
</protein>
<gene>
    <name evidence="4" type="primary">AGL49</name>
    <name evidence="6" type="ordered locus">At1g60040</name>
    <name evidence="7" type="ORF">T2K10.9</name>
</gene>
<organism>
    <name type="scientific">Arabidopsis thaliana</name>
    <name type="common">Mouse-ear cress</name>
    <dbReference type="NCBI Taxonomy" id="3702"/>
    <lineage>
        <taxon>Eukaryota</taxon>
        <taxon>Viridiplantae</taxon>
        <taxon>Streptophyta</taxon>
        <taxon>Embryophyta</taxon>
        <taxon>Tracheophyta</taxon>
        <taxon>Spermatophyta</taxon>
        <taxon>Magnoliopsida</taxon>
        <taxon>eudicotyledons</taxon>
        <taxon>Gunneridae</taxon>
        <taxon>Pentapetalae</taxon>
        <taxon>rosids</taxon>
        <taxon>malvids</taxon>
        <taxon>Brassicales</taxon>
        <taxon>Brassicaceae</taxon>
        <taxon>Camelineae</taxon>
        <taxon>Arabidopsis</taxon>
    </lineage>
</organism>